<organism>
    <name type="scientific">Bos taurus</name>
    <name type="common">Bovine</name>
    <dbReference type="NCBI Taxonomy" id="9913"/>
    <lineage>
        <taxon>Eukaryota</taxon>
        <taxon>Metazoa</taxon>
        <taxon>Chordata</taxon>
        <taxon>Craniata</taxon>
        <taxon>Vertebrata</taxon>
        <taxon>Euteleostomi</taxon>
        <taxon>Mammalia</taxon>
        <taxon>Eutheria</taxon>
        <taxon>Laurasiatheria</taxon>
        <taxon>Artiodactyla</taxon>
        <taxon>Ruminantia</taxon>
        <taxon>Pecora</taxon>
        <taxon>Bovidae</taxon>
        <taxon>Bovinae</taxon>
        <taxon>Bos</taxon>
    </lineage>
</organism>
<name>GCSH_BOVIN</name>
<dbReference type="EMBL" id="M58361">
    <property type="protein sequence ID" value="AAA62710.1"/>
    <property type="molecule type" value="mRNA"/>
</dbReference>
<dbReference type="EMBL" id="BC120070">
    <property type="protein sequence ID" value="AAI20071.1"/>
    <property type="molecule type" value="mRNA"/>
</dbReference>
<dbReference type="PIR" id="A39214">
    <property type="entry name" value="GCBOH"/>
</dbReference>
<dbReference type="RefSeq" id="NP_777269.1">
    <property type="nucleotide sequence ID" value="NM_174844.1"/>
</dbReference>
<dbReference type="RefSeq" id="XP_005218441.1">
    <property type="nucleotide sequence ID" value="XM_005218384.2"/>
</dbReference>
<dbReference type="PDB" id="3KLR">
    <property type="method" value="X-ray"/>
    <property type="resolution" value="0.88 A"/>
    <property type="chains" value="A=49-173"/>
</dbReference>
<dbReference type="PDB" id="3WDN">
    <property type="method" value="X-ray"/>
    <property type="resolution" value="0.86 A"/>
    <property type="chains" value="A=49-173"/>
</dbReference>
<dbReference type="PDBsum" id="3KLR"/>
<dbReference type="PDBsum" id="3WDN"/>
<dbReference type="SMR" id="P20821"/>
<dbReference type="FunCoup" id="P20821">
    <property type="interactions" value="1256"/>
</dbReference>
<dbReference type="STRING" id="9913.ENSBTAP00000008936"/>
<dbReference type="PaxDb" id="9913-ENSBTAP00000008936"/>
<dbReference type="PeptideAtlas" id="P20821"/>
<dbReference type="Ensembl" id="ENSBTAT00000008936.3">
    <property type="protein sequence ID" value="ENSBTAP00000008936.1"/>
    <property type="gene ID" value="ENSBTAG00000006795.3"/>
</dbReference>
<dbReference type="GeneID" id="317723"/>
<dbReference type="KEGG" id="bta:317723"/>
<dbReference type="CTD" id="2653"/>
<dbReference type="VEuPathDB" id="HostDB:ENSBTAG00000006795"/>
<dbReference type="eggNOG" id="KOG3373">
    <property type="taxonomic scope" value="Eukaryota"/>
</dbReference>
<dbReference type="GeneTree" id="ENSGT00390000011666"/>
<dbReference type="HOGENOM" id="CLU_097408_1_1_1"/>
<dbReference type="InParanoid" id="P20821"/>
<dbReference type="OMA" id="KEHEWIR"/>
<dbReference type="OrthoDB" id="10264154at2759"/>
<dbReference type="TreeFam" id="TF300258"/>
<dbReference type="BRENDA" id="1.4.1.27">
    <property type="organism ID" value="908"/>
</dbReference>
<dbReference type="Reactome" id="R-BTA-6783984">
    <property type="pathway name" value="Glycine degradation"/>
</dbReference>
<dbReference type="Reactome" id="R-BTA-9857492">
    <property type="pathway name" value="Protein lipoylation"/>
</dbReference>
<dbReference type="EvolutionaryTrace" id="P20821"/>
<dbReference type="Proteomes" id="UP000009136">
    <property type="component" value="Chromosome 18"/>
</dbReference>
<dbReference type="Bgee" id="ENSBTAG00000006795">
    <property type="expression patterns" value="Expressed in caput epididymis and 105 other cell types or tissues"/>
</dbReference>
<dbReference type="GO" id="GO:0005960">
    <property type="term" value="C:glycine cleavage complex"/>
    <property type="evidence" value="ECO:0000318"/>
    <property type="project" value="GO_Central"/>
</dbReference>
<dbReference type="GO" id="GO:0005739">
    <property type="term" value="C:mitochondrion"/>
    <property type="evidence" value="ECO:0000314"/>
    <property type="project" value="UniProtKB"/>
</dbReference>
<dbReference type="GO" id="GO:0019464">
    <property type="term" value="P:glycine decarboxylation via glycine cleavage system"/>
    <property type="evidence" value="ECO:0000318"/>
    <property type="project" value="GO_Central"/>
</dbReference>
<dbReference type="CDD" id="cd06848">
    <property type="entry name" value="GCS_H"/>
    <property type="match status" value="1"/>
</dbReference>
<dbReference type="FunFam" id="2.40.50.100:FF:000045">
    <property type="entry name" value="Glycine cleavage system H protein"/>
    <property type="match status" value="1"/>
</dbReference>
<dbReference type="Gene3D" id="2.40.50.100">
    <property type="match status" value="1"/>
</dbReference>
<dbReference type="HAMAP" id="MF_00272">
    <property type="entry name" value="GcvH"/>
    <property type="match status" value="1"/>
</dbReference>
<dbReference type="InterPro" id="IPR003016">
    <property type="entry name" value="2-oxoA_DH_lipoyl-BS"/>
</dbReference>
<dbReference type="InterPro" id="IPR000089">
    <property type="entry name" value="Biotin_lipoyl"/>
</dbReference>
<dbReference type="InterPro" id="IPR002930">
    <property type="entry name" value="GCV_H"/>
</dbReference>
<dbReference type="InterPro" id="IPR033753">
    <property type="entry name" value="GCV_H/Fam206"/>
</dbReference>
<dbReference type="InterPro" id="IPR017453">
    <property type="entry name" value="GCV_H_sub"/>
</dbReference>
<dbReference type="InterPro" id="IPR011053">
    <property type="entry name" value="Single_hybrid_motif"/>
</dbReference>
<dbReference type="NCBIfam" id="TIGR00527">
    <property type="entry name" value="gcvH"/>
    <property type="match status" value="1"/>
</dbReference>
<dbReference type="NCBIfam" id="NF002270">
    <property type="entry name" value="PRK01202.1"/>
    <property type="match status" value="1"/>
</dbReference>
<dbReference type="PANTHER" id="PTHR11715">
    <property type="entry name" value="GLYCINE CLEAVAGE SYSTEM H PROTEIN"/>
    <property type="match status" value="1"/>
</dbReference>
<dbReference type="PANTHER" id="PTHR11715:SF42">
    <property type="entry name" value="GLYCINE CLEAVAGE SYSTEM H PROTEIN, MITOCHONDRIAL"/>
    <property type="match status" value="1"/>
</dbReference>
<dbReference type="Pfam" id="PF01597">
    <property type="entry name" value="GCV_H"/>
    <property type="match status" value="1"/>
</dbReference>
<dbReference type="SUPFAM" id="SSF51230">
    <property type="entry name" value="Single hybrid motif"/>
    <property type="match status" value="1"/>
</dbReference>
<dbReference type="PROSITE" id="PS50968">
    <property type="entry name" value="BIOTINYL_LIPOYL"/>
    <property type="match status" value="1"/>
</dbReference>
<dbReference type="PROSITE" id="PS00189">
    <property type="entry name" value="LIPOYL"/>
    <property type="match status" value="1"/>
</dbReference>
<sequence>MALRAVRSVRAAVGGLRAISAPSAPCLPRPWGLRAGAVRELRTGPALLSVRKFTEKHEWVTTENGVGTVGISNFAQEALGDVVYCSLPEVGTKLNKQEEFGALESVKAASELYSPLSGEVTEINKALAENPGLVNKSCYEDGWLIKMTFSNPSELDELMSEEAYEKYIKSIEE</sequence>
<reference key="1">
    <citation type="journal article" date="1990" name="J. Biol. Chem.">
        <title>cDNA sequence, in vitro synthesis, and intramitochondrial lipoylation of H-protein of the glycine cleavage system.</title>
        <authorList>
            <person name="Fujiwara K."/>
            <person name="Okamura-Ikeda K."/>
            <person name="Motokawa Y."/>
        </authorList>
    </citation>
    <scope>NUCLEOTIDE SEQUENCE [MRNA]</scope>
    <scope>PROTEIN SEQUENCE OF 49-78 AND 97-115</scope>
    <scope>LIPOYLATION AT LYS-107</scope>
    <scope>COFACTOR</scope>
    <scope>SUBCELLULAR LOCATION</scope>
    <source>
        <tissue>Liver</tissue>
    </source>
</reference>
<reference key="2">
    <citation type="submission" date="2006-08" db="EMBL/GenBank/DDBJ databases">
        <authorList>
            <consortium name="NIH - Mammalian Gene Collection (MGC) project"/>
        </authorList>
    </citation>
    <scope>NUCLEOTIDE SEQUENCE [LARGE SCALE MRNA]</scope>
    <source>
        <strain>Hereford</strain>
        <tissue>Fetal pons</tissue>
    </source>
</reference>
<reference key="3">
    <citation type="journal article" date="1986" name="FEBS Lett.">
        <title>Purification and biochemical characterization of hepatic ferredoxin (hepatoredoxin) from bovine liver mitochondria.</title>
        <authorList>
            <person name="Waki N."/>
            <person name="Hiwatashi A."/>
            <person name="Ichikawa Y."/>
        </authorList>
    </citation>
    <scope>PROTEIN SEQUENCE OF 49-65</scope>
    <scope>SUBCELLULAR LOCATION</scope>
    <source>
        <tissue>Liver</tissue>
    </source>
</reference>
<reference key="4">
    <citation type="journal article" date="1989" name="Eur. J. Biochem.">
        <title>Characterization and N-terminal amino acid sequence of multiple ferredoxins in kidney and adrenal mitochondria.</title>
        <authorList>
            <person name="Driscoll W.J."/>
            <person name="Omdahl J.L."/>
        </authorList>
    </citation>
    <scope>PROTEIN SEQUENCE OF 49-63</scope>
    <scope>SUBCELLULAR LOCATION</scope>
</reference>
<reference key="5">
    <citation type="journal article" date="2010" name="Acta Crystallogr. D">
        <title>High-resolution X-ray crystal structure of bovine H-protein at 0.88 A resolution.</title>
        <authorList>
            <person name="Higashiura A."/>
            <person name="Kurakane T."/>
            <person name="Matsuda M."/>
            <person name="Suzuki M."/>
            <person name="Inaka K."/>
            <person name="Sato M."/>
            <person name="Kobayashi T."/>
            <person name="Tanaka T."/>
            <person name="Tanaka H."/>
            <person name="Fujiwara K."/>
            <person name="Nakagawa A."/>
        </authorList>
    </citation>
    <scope>X-RAY CRYSTALLOGRAPHY (0.88 ANGSTROMS) OF 49-173</scope>
</reference>
<accession>P20821</accession>
<accession>Q0P5G3</accession>
<keyword id="KW-0002">3D-structure</keyword>
<keyword id="KW-0903">Direct protein sequencing</keyword>
<keyword id="KW-0450">Lipoyl</keyword>
<keyword id="KW-0496">Mitochondrion</keyword>
<keyword id="KW-1185">Reference proteome</keyword>
<keyword id="KW-0809">Transit peptide</keyword>
<protein>
    <recommendedName>
        <fullName evidence="7">Glycine cleavage system H protein, mitochondrial</fullName>
    </recommendedName>
    <alternativeName>
        <fullName>Lipoic acid-containing protein</fullName>
    </alternativeName>
</protein>
<evidence type="ECO:0000250" key="1">
    <source>
        <dbReference type="UniProtKB" id="P11183"/>
    </source>
</evidence>
<evidence type="ECO:0000250" key="2">
    <source>
        <dbReference type="UniProtKB" id="P23434"/>
    </source>
</evidence>
<evidence type="ECO:0000255" key="3">
    <source>
        <dbReference type="PROSITE-ProRule" id="PRU01066"/>
    </source>
</evidence>
<evidence type="ECO:0000269" key="4">
    <source>
    </source>
</evidence>
<evidence type="ECO:0000269" key="5">
    <source>
    </source>
</evidence>
<evidence type="ECO:0000269" key="6">
    <source>
    </source>
</evidence>
<evidence type="ECO:0000303" key="7">
    <source>
    </source>
</evidence>
<evidence type="ECO:0000305" key="8"/>
<evidence type="ECO:0007829" key="9">
    <source>
        <dbReference type="PDB" id="3WDN"/>
    </source>
</evidence>
<comment type="function">
    <text evidence="2">The glycine cleavage system catalyzes the degradation of glycine. The H protein (GCSH) shuttles the methylamine group of glycine from the P protein (GLDC) to the T protein (GCST). Has a pivotal role in the lipoylation of enzymes involved in cellular energetics such as the mitochondrial dihydrolipoyllysine-residue acetyltransferase component of pyruvate dehydrogenase complex (DLAT), and the mitochondrial dihydrolipoyllysine-residue succinyltransferase component of 2-oxoglutarate dehydrogenase complex (DLST).</text>
</comment>
<comment type="cofactor">
    <cofactor evidence="4">
        <name>(R)-lipoate</name>
        <dbReference type="ChEBI" id="CHEBI:83088"/>
    </cofactor>
    <text evidence="4">Binds 1 lipoyl cofactor covalently.</text>
</comment>
<comment type="subunit">
    <text evidence="1">Interacts with GLDC (By similarity). The glycine cleavage system is composed of four proteins: P (GLDC), T (GCST), L (DLD) and H (GCSH).</text>
</comment>
<comment type="subcellular location">
    <subcellularLocation>
        <location evidence="4 5 6">Mitochondrion</location>
    </subcellularLocation>
</comment>
<comment type="similarity">
    <text evidence="8">Belongs to the GcvH family.</text>
</comment>
<comment type="caution">
    <text evidence="8">Was originally (PubMed:3080335, PubMed:2553401) thought to be a ferredoxin.</text>
</comment>
<gene>
    <name evidence="2" type="primary">GCSH</name>
</gene>
<proteinExistence type="evidence at protein level"/>
<feature type="transit peptide" description="Mitochondrion" evidence="4 5 6">
    <location>
        <begin position="1"/>
        <end position="48"/>
    </location>
</feature>
<feature type="chain" id="PRO_0000010722" description="Glycine cleavage system H protein, mitochondrial">
    <location>
        <begin position="49"/>
        <end position="173"/>
    </location>
</feature>
<feature type="domain" description="Lipoyl-binding" evidence="3">
    <location>
        <begin position="66"/>
        <end position="148"/>
    </location>
</feature>
<feature type="modified residue" description="N6-lipoyllysine" evidence="3 4">
    <location>
        <position position="107"/>
    </location>
</feature>
<feature type="sequence conflict" description="In Ref. 4; AA sequence." evidence="8" ref="4">
    <original>S</original>
    <variation>G</variation>
    <location>
        <position position="49"/>
    </location>
</feature>
<feature type="strand" evidence="9">
    <location>
        <begin position="57"/>
        <end position="63"/>
    </location>
</feature>
<feature type="strand" evidence="9">
    <location>
        <begin position="66"/>
        <end position="71"/>
    </location>
</feature>
<feature type="helix" evidence="9">
    <location>
        <begin position="73"/>
        <end position="79"/>
    </location>
</feature>
<feature type="strand" evidence="9">
    <location>
        <begin position="81"/>
        <end position="86"/>
    </location>
</feature>
<feature type="strand" evidence="9">
    <location>
        <begin position="99"/>
        <end position="107"/>
    </location>
</feature>
<feature type="strand" evidence="9">
    <location>
        <begin position="109"/>
        <end position="113"/>
    </location>
</feature>
<feature type="strand" evidence="9">
    <location>
        <begin position="115"/>
        <end position="123"/>
    </location>
</feature>
<feature type="helix" evidence="9">
    <location>
        <begin position="125"/>
        <end position="127"/>
    </location>
</feature>
<feature type="helix" evidence="9">
    <location>
        <begin position="133"/>
        <end position="136"/>
    </location>
</feature>
<feature type="turn" evidence="9">
    <location>
        <begin position="138"/>
        <end position="142"/>
    </location>
</feature>
<feature type="strand" evidence="9">
    <location>
        <begin position="145"/>
        <end position="150"/>
    </location>
</feature>
<feature type="helix" evidence="9">
    <location>
        <begin position="152"/>
        <end position="157"/>
    </location>
</feature>
<feature type="strand" evidence="9">
    <location>
        <begin position="158"/>
        <end position="160"/>
    </location>
</feature>
<feature type="helix" evidence="9">
    <location>
        <begin position="161"/>
        <end position="172"/>
    </location>
</feature>